<keyword id="KW-0256">Endoplasmic reticulum</keyword>
<keyword id="KW-0325">Glycoprotein</keyword>
<keyword id="KW-0472">Membrane</keyword>
<keyword id="KW-1185">Reference proteome</keyword>
<keyword id="KW-0677">Repeat</keyword>
<keyword id="KW-0802">TPR repeat</keyword>
<keyword id="KW-0808">Transferase</keyword>
<keyword id="KW-0812">Transmembrane</keyword>
<keyword id="KW-1133">Transmembrane helix</keyword>
<reference key="1">
    <citation type="journal article" date="2000" name="Science">
        <title>The genome sequence of Drosophila melanogaster.</title>
        <authorList>
            <person name="Adams M.D."/>
            <person name="Celniker S.E."/>
            <person name="Holt R.A."/>
            <person name="Evans C.A."/>
            <person name="Gocayne J.D."/>
            <person name="Amanatides P.G."/>
            <person name="Scherer S.E."/>
            <person name="Li P.W."/>
            <person name="Hoskins R.A."/>
            <person name="Galle R.F."/>
            <person name="George R.A."/>
            <person name="Lewis S.E."/>
            <person name="Richards S."/>
            <person name="Ashburner M."/>
            <person name="Henderson S.N."/>
            <person name="Sutton G.G."/>
            <person name="Wortman J.R."/>
            <person name="Yandell M.D."/>
            <person name="Zhang Q."/>
            <person name="Chen L.X."/>
            <person name="Brandon R.C."/>
            <person name="Rogers Y.-H.C."/>
            <person name="Blazej R.G."/>
            <person name="Champe M."/>
            <person name="Pfeiffer B.D."/>
            <person name="Wan K.H."/>
            <person name="Doyle C."/>
            <person name="Baxter E.G."/>
            <person name="Helt G."/>
            <person name="Nelson C.R."/>
            <person name="Miklos G.L.G."/>
            <person name="Abril J.F."/>
            <person name="Agbayani A."/>
            <person name="An H.-J."/>
            <person name="Andrews-Pfannkoch C."/>
            <person name="Baldwin D."/>
            <person name="Ballew R.M."/>
            <person name="Basu A."/>
            <person name="Baxendale J."/>
            <person name="Bayraktaroglu L."/>
            <person name="Beasley E.M."/>
            <person name="Beeson K.Y."/>
            <person name="Benos P.V."/>
            <person name="Berman B.P."/>
            <person name="Bhandari D."/>
            <person name="Bolshakov S."/>
            <person name="Borkova D."/>
            <person name="Botchan M.R."/>
            <person name="Bouck J."/>
            <person name="Brokstein P."/>
            <person name="Brottier P."/>
            <person name="Burtis K.C."/>
            <person name="Busam D.A."/>
            <person name="Butler H."/>
            <person name="Cadieu E."/>
            <person name="Center A."/>
            <person name="Chandra I."/>
            <person name="Cherry J.M."/>
            <person name="Cawley S."/>
            <person name="Dahlke C."/>
            <person name="Davenport L.B."/>
            <person name="Davies P."/>
            <person name="de Pablos B."/>
            <person name="Delcher A."/>
            <person name="Deng Z."/>
            <person name="Mays A.D."/>
            <person name="Dew I."/>
            <person name="Dietz S.M."/>
            <person name="Dodson K."/>
            <person name="Doup L.E."/>
            <person name="Downes M."/>
            <person name="Dugan-Rocha S."/>
            <person name="Dunkov B.C."/>
            <person name="Dunn P."/>
            <person name="Durbin K.J."/>
            <person name="Evangelista C.C."/>
            <person name="Ferraz C."/>
            <person name="Ferriera S."/>
            <person name="Fleischmann W."/>
            <person name="Fosler C."/>
            <person name="Gabrielian A.E."/>
            <person name="Garg N.S."/>
            <person name="Gelbart W.M."/>
            <person name="Glasser K."/>
            <person name="Glodek A."/>
            <person name="Gong F."/>
            <person name="Gorrell J.H."/>
            <person name="Gu Z."/>
            <person name="Guan P."/>
            <person name="Harris M."/>
            <person name="Harris N.L."/>
            <person name="Harvey D.A."/>
            <person name="Heiman T.J."/>
            <person name="Hernandez J.R."/>
            <person name="Houck J."/>
            <person name="Hostin D."/>
            <person name="Houston K.A."/>
            <person name="Howland T.J."/>
            <person name="Wei M.-H."/>
            <person name="Ibegwam C."/>
            <person name="Jalali M."/>
            <person name="Kalush F."/>
            <person name="Karpen G.H."/>
            <person name="Ke Z."/>
            <person name="Kennison J.A."/>
            <person name="Ketchum K.A."/>
            <person name="Kimmel B.E."/>
            <person name="Kodira C.D."/>
            <person name="Kraft C.L."/>
            <person name="Kravitz S."/>
            <person name="Kulp D."/>
            <person name="Lai Z."/>
            <person name="Lasko P."/>
            <person name="Lei Y."/>
            <person name="Levitsky A.A."/>
            <person name="Li J.H."/>
            <person name="Li Z."/>
            <person name="Liang Y."/>
            <person name="Lin X."/>
            <person name="Liu X."/>
            <person name="Mattei B."/>
            <person name="McIntosh T.C."/>
            <person name="McLeod M.P."/>
            <person name="McPherson D."/>
            <person name="Merkulov G."/>
            <person name="Milshina N.V."/>
            <person name="Mobarry C."/>
            <person name="Morris J."/>
            <person name="Moshrefi A."/>
            <person name="Mount S.M."/>
            <person name="Moy M."/>
            <person name="Murphy B."/>
            <person name="Murphy L."/>
            <person name="Muzny D.M."/>
            <person name="Nelson D.L."/>
            <person name="Nelson D.R."/>
            <person name="Nelson K.A."/>
            <person name="Nixon K."/>
            <person name="Nusskern D.R."/>
            <person name="Pacleb J.M."/>
            <person name="Palazzolo M."/>
            <person name="Pittman G.S."/>
            <person name="Pan S."/>
            <person name="Pollard J."/>
            <person name="Puri V."/>
            <person name="Reese M.G."/>
            <person name="Reinert K."/>
            <person name="Remington K."/>
            <person name="Saunders R.D.C."/>
            <person name="Scheeler F."/>
            <person name="Shen H."/>
            <person name="Shue B.C."/>
            <person name="Siden-Kiamos I."/>
            <person name="Simpson M."/>
            <person name="Skupski M.P."/>
            <person name="Smith T.J."/>
            <person name="Spier E."/>
            <person name="Spradling A.C."/>
            <person name="Stapleton M."/>
            <person name="Strong R."/>
            <person name="Sun E."/>
            <person name="Svirskas R."/>
            <person name="Tector C."/>
            <person name="Turner R."/>
            <person name="Venter E."/>
            <person name="Wang A.H."/>
            <person name="Wang X."/>
            <person name="Wang Z.-Y."/>
            <person name="Wassarman D.A."/>
            <person name="Weinstock G.M."/>
            <person name="Weissenbach J."/>
            <person name="Williams S.M."/>
            <person name="Woodage T."/>
            <person name="Worley K.C."/>
            <person name="Wu D."/>
            <person name="Yang S."/>
            <person name="Yao Q.A."/>
            <person name="Ye J."/>
            <person name="Yeh R.-F."/>
            <person name="Zaveri J.S."/>
            <person name="Zhan M."/>
            <person name="Zhang G."/>
            <person name="Zhao Q."/>
            <person name="Zheng L."/>
            <person name="Zheng X.H."/>
            <person name="Zhong F.N."/>
            <person name="Zhong W."/>
            <person name="Zhou X."/>
            <person name="Zhu S.C."/>
            <person name="Zhu X."/>
            <person name="Smith H.O."/>
            <person name="Gibbs R.A."/>
            <person name="Myers E.W."/>
            <person name="Rubin G.M."/>
            <person name="Venter J.C."/>
        </authorList>
    </citation>
    <scope>NUCLEOTIDE SEQUENCE [LARGE SCALE GENOMIC DNA]</scope>
    <source>
        <strain>Berkeley</strain>
    </source>
</reference>
<reference key="2">
    <citation type="journal article" date="2002" name="Genome Biol.">
        <title>Annotation of the Drosophila melanogaster euchromatic genome: a systematic review.</title>
        <authorList>
            <person name="Misra S."/>
            <person name="Crosby M.A."/>
            <person name="Mungall C.J."/>
            <person name="Matthews B.B."/>
            <person name="Campbell K.S."/>
            <person name="Hradecky P."/>
            <person name="Huang Y."/>
            <person name="Kaminker J.S."/>
            <person name="Millburn G.H."/>
            <person name="Prochnik S.E."/>
            <person name="Smith C.D."/>
            <person name="Tupy J.L."/>
            <person name="Whitfield E.J."/>
            <person name="Bayraktaroglu L."/>
            <person name="Berman B.P."/>
            <person name="Bettencourt B.R."/>
            <person name="Celniker S.E."/>
            <person name="de Grey A.D.N.J."/>
            <person name="Drysdale R.A."/>
            <person name="Harris N.L."/>
            <person name="Richter J."/>
            <person name="Russo S."/>
            <person name="Schroeder A.J."/>
            <person name="Shu S.Q."/>
            <person name="Stapleton M."/>
            <person name="Yamada C."/>
            <person name="Ashburner M."/>
            <person name="Gelbart W.M."/>
            <person name="Rubin G.M."/>
            <person name="Lewis S.E."/>
        </authorList>
    </citation>
    <scope>GENOME REANNOTATION</scope>
    <source>
        <strain>Berkeley</strain>
    </source>
</reference>
<reference key="3">
    <citation type="journal article" date="2002" name="Genome Biol.">
        <title>A Drosophila full-length cDNA resource.</title>
        <authorList>
            <person name="Stapleton M."/>
            <person name="Carlson J.W."/>
            <person name="Brokstein P."/>
            <person name="Yu C."/>
            <person name="Champe M."/>
            <person name="George R.A."/>
            <person name="Guarin H."/>
            <person name="Kronmiller B."/>
            <person name="Pacleb J.M."/>
            <person name="Park S."/>
            <person name="Wan K.H."/>
            <person name="Rubin G.M."/>
            <person name="Celniker S.E."/>
        </authorList>
    </citation>
    <scope>NUCLEOTIDE SEQUENCE [LARGE SCALE MRNA]</scope>
    <source>
        <strain>Berkeley</strain>
        <tissue>Head</tissue>
    </source>
</reference>
<name>TMTC2_DROME</name>
<sequence length="938" mass="103091">MPSLEPWLWGDSCSWLGMLAMLRLRLHKSNMDFTCLFCCSLAFVLYLNTLGAGFVYDDRRAILANADVSGGTPWQRSFSNDFWGTPLTDSGSHGSWRPLCVLSFRLNYLIGGGFAPWGFHLVNNLLHCVATALVVRVARTLLASVWAVLAAGALFAAHPIHTEAVAGVVGRADLAACVCYLLTYLSYLRHMRWRESGDPRQWLALGATLILAAAGLLCKETAITALLVCALFDVMRGLSGQVDKQRLRSVCIVLGALFCMAYCRLVIVPGPQTAFSSADNPIARTPSAWTRLLTFLYLPVFNLRLLLQPNVLSFDWGMDALPRVTSLWDRRNAQSACFYSVLVGVAWGSCRQLLSGSKEVTHCGVSSTFPQYHIQKVASRKSRSKRKRLANNTKYQAFEAAYHQQQQEALPCRDCNNNNSSGYVYEGSSPVAQAPAQAPHLVSSAFRGSRSSSSCSNSTNSSSSSSSSSSSSSSSSSSLSGGFQCSSKDYALEGMSPANRHACVLIMSLSFLALPFLPASNLLFYVGFVVAERLLYLPSVGFCLLVGYGVSKLMSCNQRTRNILLLSFSLLLAAMSLRTLRRNADWRDEESLYRSAIAINPPKALGNLGSVLSSQGRYEEAKQVLQEAIRFRPNMADVHFNLGILHQNQQVYPAAVECFQRAIKFRPNLAVAYLNLGISFIALGKRQQAIEILQAGSNLDGAAVRDRTAHDQARSSAYLQLGALYVEQGKLQRALAIYREALSSLPGLPQQREILYQRIGDVLGRLQQWDEAERHHRAALELQPNQVAAHLSYGITLARNSSRASEAEMWFKRALKLAPEQASVYHHYAEFLSLQSRHHESAIYHRRAAELAPNDYTLVVAAATAMRLLDRKVDAEMWYRKAVALRPGDAHAHTNLGAILHLLGRTNHAAASYKAALRLQPGDAITLGNLAKLGVTNV</sequence>
<dbReference type="EC" id="2.4.1.109" evidence="1"/>
<dbReference type="EMBL" id="AE014134">
    <property type="protein sequence ID" value="AAF51432.1"/>
    <property type="molecule type" value="Genomic_DNA"/>
</dbReference>
<dbReference type="EMBL" id="AF181645">
    <property type="protein sequence ID" value="AAD55431.1"/>
    <property type="molecule type" value="mRNA"/>
</dbReference>
<dbReference type="RefSeq" id="NP_608558.1">
    <property type="nucleotide sequence ID" value="NM_134714.5"/>
</dbReference>
<dbReference type="SMR" id="Q9V3X5"/>
<dbReference type="BioGRID" id="59530">
    <property type="interactions" value="1"/>
</dbReference>
<dbReference type="FunCoup" id="Q9V3X5">
    <property type="interactions" value="95"/>
</dbReference>
<dbReference type="STRING" id="7227.FBpp0077614"/>
<dbReference type="GlyGen" id="Q9V3X5">
    <property type="glycosylation" value="1 site"/>
</dbReference>
<dbReference type="PaxDb" id="7227-FBpp0077614"/>
<dbReference type="EnsemblMetazoa" id="FBtr0077949">
    <property type="protein sequence ID" value="FBpp0077614"/>
    <property type="gene ID" value="FBgn0028481"/>
</dbReference>
<dbReference type="GeneID" id="33276"/>
<dbReference type="KEGG" id="dme:Dmel_CG4341"/>
<dbReference type="UCSC" id="CG4341-RA">
    <property type="organism name" value="d. melanogaster"/>
</dbReference>
<dbReference type="AGR" id="FB:FBgn0028481"/>
<dbReference type="CTD" id="160335"/>
<dbReference type="FlyBase" id="FBgn0028481">
    <property type="gene designation" value="Tmtc2"/>
</dbReference>
<dbReference type="VEuPathDB" id="VectorBase:FBgn0028481"/>
<dbReference type="eggNOG" id="KOG1124">
    <property type="taxonomic scope" value="Eukaryota"/>
</dbReference>
<dbReference type="GeneTree" id="ENSGT00940000166588"/>
<dbReference type="InParanoid" id="Q9V3X5"/>
<dbReference type="OMA" id="TQIFYND"/>
<dbReference type="OrthoDB" id="1658288at2759"/>
<dbReference type="PhylomeDB" id="Q9V3X5"/>
<dbReference type="UniPathway" id="UPA00378"/>
<dbReference type="BioGRID-ORCS" id="33276">
    <property type="hits" value="0 hits in 1 CRISPR screen"/>
</dbReference>
<dbReference type="GenomeRNAi" id="33276"/>
<dbReference type="PRO" id="PR:Q9V3X5"/>
<dbReference type="Proteomes" id="UP000000803">
    <property type="component" value="Chromosome 2L"/>
</dbReference>
<dbReference type="Bgee" id="FBgn0028481">
    <property type="expression patterns" value="Expressed in transmedullary neuron Tm3a (Drosophila) in insect head and 125 other cell types or tissues"/>
</dbReference>
<dbReference type="ExpressionAtlas" id="Q9V3X5">
    <property type="expression patterns" value="baseline and differential"/>
</dbReference>
<dbReference type="GO" id="GO:0005789">
    <property type="term" value="C:endoplasmic reticulum membrane"/>
    <property type="evidence" value="ECO:0000250"/>
    <property type="project" value="FlyBase"/>
</dbReference>
<dbReference type="GO" id="GO:0004169">
    <property type="term" value="F:dolichyl-phosphate-mannose-protein mannosyltransferase activity"/>
    <property type="evidence" value="ECO:0000250"/>
    <property type="project" value="FlyBase"/>
</dbReference>
<dbReference type="GO" id="GO:0000030">
    <property type="term" value="F:mannosyltransferase activity"/>
    <property type="evidence" value="ECO:0000318"/>
    <property type="project" value="GO_Central"/>
</dbReference>
<dbReference type="GO" id="GO:0035269">
    <property type="term" value="P:protein O-linked mannosylation"/>
    <property type="evidence" value="ECO:0000250"/>
    <property type="project" value="FlyBase"/>
</dbReference>
<dbReference type="FunFam" id="1.25.40.10:FF:001693">
    <property type="entry name" value="Protein O-mannosyl-transferase TMTC2"/>
    <property type="match status" value="1"/>
</dbReference>
<dbReference type="FunFam" id="1.25.40.10:FF:001996">
    <property type="entry name" value="Protein O-mannosyl-transferase TMTC2"/>
    <property type="match status" value="1"/>
</dbReference>
<dbReference type="Gene3D" id="1.25.40.10">
    <property type="entry name" value="Tetratricopeptide repeat domain"/>
    <property type="match status" value="4"/>
</dbReference>
<dbReference type="InterPro" id="IPR013618">
    <property type="entry name" value="TMTC_DUF1736"/>
</dbReference>
<dbReference type="InterPro" id="IPR052384">
    <property type="entry name" value="TMTC_O-mannosyltransferase"/>
</dbReference>
<dbReference type="InterPro" id="IPR011990">
    <property type="entry name" value="TPR-like_helical_dom_sf"/>
</dbReference>
<dbReference type="InterPro" id="IPR019734">
    <property type="entry name" value="TPR_rpt"/>
</dbReference>
<dbReference type="PANTHER" id="PTHR44216">
    <property type="entry name" value="PROTEIN O-MANNOSYL-TRANSFERASE TMTC2"/>
    <property type="match status" value="1"/>
</dbReference>
<dbReference type="PANTHER" id="PTHR44216:SF3">
    <property type="entry name" value="PROTEIN O-MANNOSYL-TRANSFERASE TMTC2"/>
    <property type="match status" value="1"/>
</dbReference>
<dbReference type="Pfam" id="PF08409">
    <property type="entry name" value="TMTC_DUF1736"/>
    <property type="match status" value="1"/>
</dbReference>
<dbReference type="Pfam" id="PF13374">
    <property type="entry name" value="TPR_10"/>
    <property type="match status" value="1"/>
</dbReference>
<dbReference type="Pfam" id="PF13414">
    <property type="entry name" value="TPR_11"/>
    <property type="match status" value="1"/>
</dbReference>
<dbReference type="Pfam" id="PF13432">
    <property type="entry name" value="TPR_16"/>
    <property type="match status" value="2"/>
</dbReference>
<dbReference type="Pfam" id="PF13174">
    <property type="entry name" value="TPR_6"/>
    <property type="match status" value="1"/>
</dbReference>
<dbReference type="SMART" id="SM00028">
    <property type="entry name" value="TPR"/>
    <property type="match status" value="8"/>
</dbReference>
<dbReference type="SUPFAM" id="SSF48452">
    <property type="entry name" value="TPR-like"/>
    <property type="match status" value="2"/>
</dbReference>
<dbReference type="PROSITE" id="PS50005">
    <property type="entry name" value="TPR"/>
    <property type="match status" value="7"/>
</dbReference>
<dbReference type="PROSITE" id="PS50293">
    <property type="entry name" value="TPR_REGION"/>
    <property type="match status" value="4"/>
</dbReference>
<gene>
    <name evidence="7" type="primary">Tmtc2</name>
    <name evidence="7" type="ORF">CG4341</name>
</gene>
<organism evidence="8">
    <name type="scientific">Drosophila melanogaster</name>
    <name type="common">Fruit fly</name>
    <dbReference type="NCBI Taxonomy" id="7227"/>
    <lineage>
        <taxon>Eukaryota</taxon>
        <taxon>Metazoa</taxon>
        <taxon>Ecdysozoa</taxon>
        <taxon>Arthropoda</taxon>
        <taxon>Hexapoda</taxon>
        <taxon>Insecta</taxon>
        <taxon>Pterygota</taxon>
        <taxon>Neoptera</taxon>
        <taxon>Endopterygota</taxon>
        <taxon>Diptera</taxon>
        <taxon>Brachycera</taxon>
        <taxon>Muscomorpha</taxon>
        <taxon>Ephydroidea</taxon>
        <taxon>Drosophilidae</taxon>
        <taxon>Drosophila</taxon>
        <taxon>Sophophora</taxon>
    </lineage>
</organism>
<accession>Q9V3X5</accession>
<proteinExistence type="evidence at transcript level"/>
<protein>
    <recommendedName>
        <fullName evidence="6">Protein O-mannosyl-transferase Tmtc2</fullName>
        <ecNumber evidence="1">2.4.1.109</ecNumber>
    </recommendedName>
    <alternativeName>
        <fullName evidence="7">Transmembrane O-mannosyltransferase targeting cadherins 2</fullName>
    </alternativeName>
    <alternativeName>
        <fullName evidence="1">Transmembrane and tetratricopeptide repeat-containing 2</fullName>
    </alternativeName>
</protein>
<evidence type="ECO:0000250" key="1">
    <source>
        <dbReference type="UniProtKB" id="Q8N394"/>
    </source>
</evidence>
<evidence type="ECO:0000255" key="2"/>
<evidence type="ECO:0000255" key="3">
    <source>
        <dbReference type="PROSITE-ProRule" id="PRU00339"/>
    </source>
</evidence>
<evidence type="ECO:0000255" key="4">
    <source>
        <dbReference type="PROSITE-ProRule" id="PRU00498"/>
    </source>
</evidence>
<evidence type="ECO:0000256" key="5">
    <source>
        <dbReference type="SAM" id="MobiDB-lite"/>
    </source>
</evidence>
<evidence type="ECO:0000305" key="6"/>
<evidence type="ECO:0000312" key="7">
    <source>
        <dbReference type="FlyBase" id="FBgn0028481"/>
    </source>
</evidence>
<evidence type="ECO:0000312" key="8">
    <source>
        <dbReference type="Proteomes" id="UP000000803"/>
    </source>
</evidence>
<feature type="chain" id="PRO_0000280299" description="Protein O-mannosyl-transferase Tmtc2">
    <location>
        <begin position="1"/>
        <end position="938"/>
    </location>
</feature>
<feature type="topological domain" description="Cytoplasmic" evidence="6">
    <location>
        <position position="1"/>
    </location>
</feature>
<feature type="transmembrane region" description="Helical" evidence="2">
    <location>
        <begin position="2"/>
        <end position="22"/>
    </location>
</feature>
<feature type="topological domain" description="Extracellular" evidence="6">
    <location>
        <begin position="23"/>
        <end position="34"/>
    </location>
</feature>
<feature type="transmembrane region" description="Helical" evidence="2">
    <location>
        <begin position="35"/>
        <end position="55"/>
    </location>
</feature>
<feature type="topological domain" description="Cytoplasmic" evidence="6">
    <location>
        <begin position="56"/>
        <end position="108"/>
    </location>
</feature>
<feature type="transmembrane region" description="Helical" evidence="2">
    <location>
        <begin position="109"/>
        <end position="129"/>
    </location>
</feature>
<feature type="topological domain" description="Extracellular" evidence="6">
    <location>
        <begin position="130"/>
        <end position="139"/>
    </location>
</feature>
<feature type="transmembrane region" description="Helical" evidence="2">
    <location>
        <begin position="140"/>
        <end position="160"/>
    </location>
</feature>
<feature type="topological domain" description="Cytoplasmic" evidence="6">
    <location>
        <begin position="161"/>
        <end position="164"/>
    </location>
</feature>
<feature type="transmembrane region" description="Helical" evidence="2">
    <location>
        <begin position="165"/>
        <end position="185"/>
    </location>
</feature>
<feature type="topological domain" description="Extracellular" evidence="6">
    <location>
        <begin position="186"/>
        <end position="208"/>
    </location>
</feature>
<feature type="transmembrane region" description="Helical" evidence="2">
    <location>
        <begin position="209"/>
        <end position="229"/>
    </location>
</feature>
<feature type="topological domain" description="Cytoplasmic" evidence="6">
    <location>
        <begin position="230"/>
        <end position="249"/>
    </location>
</feature>
<feature type="transmembrane region" description="Helical" evidence="2">
    <location>
        <begin position="250"/>
        <end position="270"/>
    </location>
</feature>
<feature type="topological domain" description="Extracellular" evidence="6">
    <location>
        <begin position="271"/>
        <end position="291"/>
    </location>
</feature>
<feature type="transmembrane region" description="Helical" evidence="2">
    <location>
        <begin position="292"/>
        <end position="312"/>
    </location>
</feature>
<feature type="topological domain" description="Cytoplasmic" evidence="6">
    <location>
        <begin position="313"/>
        <end position="510"/>
    </location>
</feature>
<feature type="transmembrane region" description="Helical" evidence="2">
    <location>
        <begin position="511"/>
        <end position="531"/>
    </location>
</feature>
<feature type="topological domain" description="Extracellular" evidence="6">
    <location>
        <begin position="532"/>
        <end position="533"/>
    </location>
</feature>
<feature type="transmembrane region" description="Helical" evidence="2">
    <location>
        <begin position="534"/>
        <end position="554"/>
    </location>
</feature>
<feature type="topological domain" description="Cytoplasmic" evidence="6">
    <location>
        <begin position="555"/>
        <end position="562"/>
    </location>
</feature>
<feature type="transmembrane region" description="Helical" evidence="2">
    <location>
        <begin position="563"/>
        <end position="580"/>
    </location>
</feature>
<feature type="topological domain" description="Extracellular" evidence="6">
    <location>
        <begin position="581"/>
        <end position="938"/>
    </location>
</feature>
<feature type="repeat" description="TPR 1" evidence="3">
    <location>
        <begin position="602"/>
        <end position="635"/>
    </location>
</feature>
<feature type="repeat" description="TPR 2" evidence="3">
    <location>
        <begin position="636"/>
        <end position="669"/>
    </location>
</feature>
<feature type="repeat" description="TPR 3" evidence="3">
    <location>
        <begin position="670"/>
        <end position="703"/>
    </location>
</feature>
<feature type="repeat" description="TPR 4" evidence="3">
    <location>
        <begin position="715"/>
        <end position="748"/>
    </location>
</feature>
<feature type="repeat" description="TPR 5" evidence="3">
    <location>
        <begin position="753"/>
        <end position="786"/>
    </location>
</feature>
<feature type="repeat" description="TPR 8" evidence="2">
    <location>
        <begin position="788"/>
        <end position="821"/>
    </location>
</feature>
<feature type="repeat" description="TPR 6" evidence="3">
    <location>
        <begin position="822"/>
        <end position="855"/>
    </location>
</feature>
<feature type="repeat" description="TPR 7" evidence="2">
    <location>
        <begin position="856"/>
        <end position="889"/>
    </location>
</feature>
<feature type="repeat" description="TPR 8" evidence="3">
    <location>
        <begin position="890"/>
        <end position="923"/>
    </location>
</feature>
<feature type="region of interest" description="Disordered" evidence="5">
    <location>
        <begin position="450"/>
        <end position="480"/>
    </location>
</feature>
<feature type="glycosylation site" description="N-linked (GlcNAc...) asparagine" evidence="4">
    <location>
        <position position="800"/>
    </location>
</feature>
<comment type="function">
    <text evidence="1">Transfers mannosyl residues to the hydroxyl group of serine or threonine residues.</text>
</comment>
<comment type="catalytic activity">
    <reaction evidence="1">
        <text>a di-trans,poly-cis-dolichyl beta-D-mannosyl phosphate + L-seryl-[protein] = 3-O-(alpha-D-mannosyl)-L-seryl-[protein] + a di-trans,poly-cis-dolichyl phosphate + H(+)</text>
        <dbReference type="Rhea" id="RHEA:17377"/>
        <dbReference type="Rhea" id="RHEA-COMP:9863"/>
        <dbReference type="Rhea" id="RHEA-COMP:13546"/>
        <dbReference type="Rhea" id="RHEA-COMP:19498"/>
        <dbReference type="Rhea" id="RHEA-COMP:19501"/>
        <dbReference type="ChEBI" id="CHEBI:15378"/>
        <dbReference type="ChEBI" id="CHEBI:29999"/>
        <dbReference type="ChEBI" id="CHEBI:57683"/>
        <dbReference type="ChEBI" id="CHEBI:58211"/>
        <dbReference type="ChEBI" id="CHEBI:137321"/>
        <dbReference type="EC" id="2.4.1.109"/>
    </reaction>
</comment>
<comment type="catalytic activity">
    <reaction evidence="1">
        <text>a di-trans,poly-cis-dolichyl beta-D-mannosyl phosphate + L-threonyl-[protein] = 3-O-(alpha-D-mannosyl)-L-threonyl-[protein] + a di-trans,poly-cis-dolichyl phosphate + H(+)</text>
        <dbReference type="Rhea" id="RHEA:53396"/>
        <dbReference type="Rhea" id="RHEA-COMP:11060"/>
        <dbReference type="Rhea" id="RHEA-COMP:13547"/>
        <dbReference type="Rhea" id="RHEA-COMP:19498"/>
        <dbReference type="Rhea" id="RHEA-COMP:19501"/>
        <dbReference type="ChEBI" id="CHEBI:15378"/>
        <dbReference type="ChEBI" id="CHEBI:30013"/>
        <dbReference type="ChEBI" id="CHEBI:57683"/>
        <dbReference type="ChEBI" id="CHEBI:58211"/>
        <dbReference type="ChEBI" id="CHEBI:137323"/>
        <dbReference type="EC" id="2.4.1.109"/>
    </reaction>
</comment>
<comment type="pathway">
    <text evidence="1">Protein modification; protein glycosylation.</text>
</comment>
<comment type="subcellular location">
    <subcellularLocation>
        <location evidence="2">Membrane</location>
        <topology evidence="2">Multi-pass membrane protein</topology>
    </subcellularLocation>
    <subcellularLocation>
        <location evidence="1">Endoplasmic reticulum</location>
    </subcellularLocation>
</comment>
<comment type="similarity">
    <text evidence="6">Belongs to the TMTC family.</text>
</comment>